<reference key="1">
    <citation type="journal article" date="2001" name="Nature">
        <title>Genome sequence and gene compaction of the eukaryote parasite Encephalitozoon cuniculi.</title>
        <authorList>
            <person name="Katinka M.D."/>
            <person name="Duprat S."/>
            <person name="Cornillot E."/>
            <person name="Metenier G."/>
            <person name="Thomarat F."/>
            <person name="Prensier G."/>
            <person name="Barbe V."/>
            <person name="Peyretaillade E."/>
            <person name="Brottier P."/>
            <person name="Wincker P."/>
            <person name="Delbac F."/>
            <person name="El Alaoui H."/>
            <person name="Peyret P."/>
            <person name="Saurin W."/>
            <person name="Gouy M."/>
            <person name="Weissenbach J."/>
            <person name="Vivares C.P."/>
        </authorList>
    </citation>
    <scope>NUCLEOTIDE SEQUENCE [LARGE SCALE GENOMIC DNA]</scope>
    <source>
        <strain>GB-M1</strain>
    </source>
</reference>
<accession>Q8SU90</accession>
<keyword id="KW-1185">Reference proteome</keyword>
<proteinExistence type="inferred from homology"/>
<gene>
    <name type="ordered locus">ECU11_0030</name>
</gene>
<protein>
    <recommendedName>
        <fullName>UPF0329 protein ECU11_0030</fullName>
    </recommendedName>
</protein>
<comment type="similarity">
    <text evidence="2">Belongs to the UPF0329 family.</text>
</comment>
<evidence type="ECO:0000256" key="1">
    <source>
        <dbReference type="SAM" id="MobiDB-lite"/>
    </source>
</evidence>
<evidence type="ECO:0000305" key="2"/>
<sequence length="641" mass="72409">MIGRMVGLEPSSRSGVLEECRECRAIVMKGDGVQTPLHKGDSILGGEGACLMRYAAWTLISAVDVVYCSLETRESVSLTFNPDGQVIVVPFMFKGYNIAALPTTKFGDLKKDTKQIENVVSFLRSDICYAVWEFLVSSVQYKDDDRFERLFDERMRGYLRNISEGTSKVYMRGNKTFSELLEMVCGRMLECSGRVAGGGGIVRYGRDVMRMLDDMIENPPAGMSEEEKKVYLEDWRSAKEWGGFLYSIERWERIAEVEKIVCNACKEICLGLREEELLGLLAEGGMKKTLKEEFSEDKAKDARYLEYIVVDDVLLLDAHREYGGEVTKELVRQMLLGKEGKDIDKRYVDRVAGVVRERQRKREEETERSVKELVGDEEKAKSKEEKAKSKRGRKGKSASAPSEQEEEKKESEVEEAEQGGEVEALPVEVGGARSKGGKKKSKGGRKCFKIHRRVLRWTKSPEKIKEEWDKGSEERWKGRSLEEIKEQKIVHDITGVLELLRSEDADRFFMDAGKYRKGGSERQRMVAIGALETGGQRMTGVVEVGTFKDGDGCPVVYHLRFKPTSIGSIGDVINPGVVEASDVGRVDEGEECEDADKFVYPKGVRFETVKETGSFQIVWKNPSDTSEVLRRLIVYCRPCVI</sequence>
<organism>
    <name type="scientific">Encephalitozoon cuniculi (strain GB-M1)</name>
    <name type="common">Microsporidian parasite</name>
    <dbReference type="NCBI Taxonomy" id="284813"/>
    <lineage>
        <taxon>Eukaryota</taxon>
        <taxon>Fungi</taxon>
        <taxon>Fungi incertae sedis</taxon>
        <taxon>Microsporidia</taxon>
        <taxon>Unikaryonidae</taxon>
        <taxon>Encephalitozoon</taxon>
    </lineage>
</organism>
<feature type="chain" id="PRO_0000223178" description="UPF0329 protein ECU11_0030">
    <location>
        <begin position="1"/>
        <end position="641"/>
    </location>
</feature>
<feature type="region of interest" description="Disordered" evidence="1">
    <location>
        <begin position="358"/>
        <end position="444"/>
    </location>
</feature>
<feature type="compositionally biased region" description="Basic and acidic residues" evidence="1">
    <location>
        <begin position="358"/>
        <end position="387"/>
    </location>
</feature>
<feature type="compositionally biased region" description="Basic residues" evidence="1">
    <location>
        <begin position="435"/>
        <end position="444"/>
    </location>
</feature>
<dbReference type="EMBL" id="AL590450">
    <property type="protein sequence ID" value="CAD25913.1"/>
    <property type="molecule type" value="Genomic_DNA"/>
</dbReference>
<dbReference type="RefSeq" id="NP_586309.1">
    <property type="nucleotide sequence ID" value="NM_001042142.1"/>
</dbReference>
<dbReference type="SMR" id="Q8SU90"/>
<dbReference type="STRING" id="284813.Q8SU90"/>
<dbReference type="GeneID" id="859960"/>
<dbReference type="KEGG" id="ecu:ECU11_0030"/>
<dbReference type="VEuPathDB" id="MicrosporidiaDB:ECU11_0030"/>
<dbReference type="HOGENOM" id="CLU_035434_0_0_1"/>
<dbReference type="InParanoid" id="Q8SU90"/>
<dbReference type="OrthoDB" id="2162691at2759"/>
<dbReference type="Proteomes" id="UP000000819">
    <property type="component" value="Chromosome XI"/>
</dbReference>
<dbReference type="InterPro" id="IPR022115">
    <property type="entry name" value="DUF3654"/>
</dbReference>
<dbReference type="InterPro" id="IPR011667">
    <property type="entry name" value="UPF0329"/>
</dbReference>
<dbReference type="Pfam" id="PF07753">
    <property type="entry name" value="DUF1609"/>
    <property type="match status" value="1"/>
</dbReference>
<dbReference type="Pfam" id="PF12376">
    <property type="entry name" value="DUF3654"/>
    <property type="match status" value="1"/>
</dbReference>
<name>YB03_ENCCU</name>